<keyword id="KW-0997">Cell inner membrane</keyword>
<keyword id="KW-1003">Cell membrane</keyword>
<keyword id="KW-0406">Ion transport</keyword>
<keyword id="KW-0472">Membrane</keyword>
<keyword id="KW-0520">NAD</keyword>
<keyword id="KW-0915">Sodium</keyword>
<keyword id="KW-0739">Sodium transport</keyword>
<keyword id="KW-1278">Translocase</keyword>
<keyword id="KW-0812">Transmembrane</keyword>
<keyword id="KW-1133">Transmembrane helix</keyword>
<keyword id="KW-0813">Transport</keyword>
<keyword id="KW-0830">Ubiquinone</keyword>
<gene>
    <name evidence="1" type="primary">nqrE</name>
    <name type="ordered locus">YE3216</name>
</gene>
<organism>
    <name type="scientific">Yersinia enterocolitica serotype O:8 / biotype 1B (strain NCTC 13174 / 8081)</name>
    <dbReference type="NCBI Taxonomy" id="393305"/>
    <lineage>
        <taxon>Bacteria</taxon>
        <taxon>Pseudomonadati</taxon>
        <taxon>Pseudomonadota</taxon>
        <taxon>Gammaproteobacteria</taxon>
        <taxon>Enterobacterales</taxon>
        <taxon>Yersiniaceae</taxon>
        <taxon>Yersinia</taxon>
    </lineage>
</organism>
<protein>
    <recommendedName>
        <fullName evidence="1">Na(+)-translocating NADH-quinone reductase subunit E</fullName>
        <shortName evidence="1">Na(+)-NQR subunit E</shortName>
        <shortName evidence="1">Na(+)-translocating NQR subunit E</shortName>
        <ecNumber evidence="1">7.2.1.1</ecNumber>
    </recommendedName>
    <alternativeName>
        <fullName evidence="1">NQR complex subunit E</fullName>
    </alternativeName>
    <alternativeName>
        <fullName evidence="1">NQR-1 subunit E</fullName>
    </alternativeName>
</protein>
<reference key="1">
    <citation type="journal article" date="2006" name="PLoS Genet.">
        <title>The complete genome sequence and comparative genome analysis of the high pathogenicity Yersinia enterocolitica strain 8081.</title>
        <authorList>
            <person name="Thomson N.R."/>
            <person name="Howard S."/>
            <person name="Wren B.W."/>
            <person name="Holden M.T.G."/>
            <person name="Crossman L."/>
            <person name="Challis G.L."/>
            <person name="Churcher C."/>
            <person name="Mungall K."/>
            <person name="Brooks K."/>
            <person name="Chillingworth T."/>
            <person name="Feltwell T."/>
            <person name="Abdellah Z."/>
            <person name="Hauser H."/>
            <person name="Jagels K."/>
            <person name="Maddison M."/>
            <person name="Moule S."/>
            <person name="Sanders M."/>
            <person name="Whitehead S."/>
            <person name="Quail M.A."/>
            <person name="Dougan G."/>
            <person name="Parkhill J."/>
            <person name="Prentice M.B."/>
        </authorList>
    </citation>
    <scope>NUCLEOTIDE SEQUENCE [LARGE SCALE GENOMIC DNA]</scope>
    <source>
        <strain>NCTC 13174 / 8081</strain>
    </source>
</reference>
<accession>A1JNZ3</accession>
<dbReference type="EC" id="7.2.1.1" evidence="1"/>
<dbReference type="EMBL" id="AM286415">
    <property type="protein sequence ID" value="CAL13248.1"/>
    <property type="molecule type" value="Genomic_DNA"/>
</dbReference>
<dbReference type="RefSeq" id="WP_004392325.1">
    <property type="nucleotide sequence ID" value="NC_008800.1"/>
</dbReference>
<dbReference type="RefSeq" id="YP_001007392.1">
    <property type="nucleotide sequence ID" value="NC_008800.1"/>
</dbReference>
<dbReference type="SMR" id="A1JNZ3"/>
<dbReference type="GeneID" id="82552104"/>
<dbReference type="KEGG" id="yen:YE3216"/>
<dbReference type="PATRIC" id="fig|393305.7.peg.3420"/>
<dbReference type="eggNOG" id="COG2209">
    <property type="taxonomic scope" value="Bacteria"/>
</dbReference>
<dbReference type="HOGENOM" id="CLU_095255_0_0_6"/>
<dbReference type="OrthoDB" id="9803631at2"/>
<dbReference type="Proteomes" id="UP000000642">
    <property type="component" value="Chromosome"/>
</dbReference>
<dbReference type="GO" id="GO:0009276">
    <property type="term" value="C:Gram-negative-bacterium-type cell wall"/>
    <property type="evidence" value="ECO:0007669"/>
    <property type="project" value="InterPro"/>
</dbReference>
<dbReference type="GO" id="GO:0005886">
    <property type="term" value="C:plasma membrane"/>
    <property type="evidence" value="ECO:0007669"/>
    <property type="project" value="UniProtKB-SubCell"/>
</dbReference>
<dbReference type="GO" id="GO:0016655">
    <property type="term" value="F:oxidoreductase activity, acting on NAD(P)H, quinone or similar compound as acceptor"/>
    <property type="evidence" value="ECO:0007669"/>
    <property type="project" value="UniProtKB-UniRule"/>
</dbReference>
<dbReference type="GO" id="GO:0022904">
    <property type="term" value="P:respiratory electron transport chain"/>
    <property type="evidence" value="ECO:0007669"/>
    <property type="project" value="InterPro"/>
</dbReference>
<dbReference type="GO" id="GO:0006814">
    <property type="term" value="P:sodium ion transport"/>
    <property type="evidence" value="ECO:0007669"/>
    <property type="project" value="UniProtKB-UniRule"/>
</dbReference>
<dbReference type="HAMAP" id="MF_00429">
    <property type="entry name" value="NqrE"/>
    <property type="match status" value="1"/>
</dbReference>
<dbReference type="InterPro" id="IPR003667">
    <property type="entry name" value="NqrDE/RnfAE"/>
</dbReference>
<dbReference type="InterPro" id="IPR050133">
    <property type="entry name" value="NqrDE/RnfAE_oxidrdctase"/>
</dbReference>
<dbReference type="InterPro" id="IPR010967">
    <property type="entry name" value="NqrE"/>
</dbReference>
<dbReference type="NCBIfam" id="TIGR01940">
    <property type="entry name" value="nqrE"/>
    <property type="match status" value="1"/>
</dbReference>
<dbReference type="PANTHER" id="PTHR30335">
    <property type="entry name" value="INTEGRAL MEMBRANE PROTEIN OF SOXR-REDUCING COMPLEX"/>
    <property type="match status" value="1"/>
</dbReference>
<dbReference type="PANTHER" id="PTHR30335:SF1">
    <property type="entry name" value="NA(+)-TRANSLOCATING NADH-QUINONE REDUCTASE SUBUNIT E"/>
    <property type="match status" value="1"/>
</dbReference>
<dbReference type="Pfam" id="PF02508">
    <property type="entry name" value="Rnf-Nqr"/>
    <property type="match status" value="1"/>
</dbReference>
<dbReference type="PIRSF" id="PIRSF006102">
    <property type="entry name" value="NQR_DE"/>
    <property type="match status" value="1"/>
</dbReference>
<sequence>MEHYISLFVRAVFVENMALAFFLGMCTFLAVSKKVSTAFGLGIAVTVVLGISVPANNLVYNLVLRDGALVEGVDLSFLNFITFIGVIAAIVQVLEMILDRYFPALYNALGIFLPLITVNCAIFGGVSFMAQRDYNFPESIVYGFGSGIGWMLAIVALAGIREKMKYANVPAGLQGLGITFITTGLMALGFMSFSGVNL</sequence>
<proteinExistence type="inferred from homology"/>
<feature type="chain" id="PRO_1000060218" description="Na(+)-translocating NADH-quinone reductase subunit E">
    <location>
        <begin position="1"/>
        <end position="198"/>
    </location>
</feature>
<feature type="transmembrane region" description="Helical" evidence="1">
    <location>
        <begin position="11"/>
        <end position="31"/>
    </location>
</feature>
<feature type="transmembrane region" description="Helical" evidence="1">
    <location>
        <begin position="35"/>
        <end position="55"/>
    </location>
</feature>
<feature type="transmembrane region" description="Helical" evidence="1">
    <location>
        <begin position="77"/>
        <end position="97"/>
    </location>
</feature>
<feature type="transmembrane region" description="Helical" evidence="1">
    <location>
        <begin position="109"/>
        <end position="129"/>
    </location>
</feature>
<feature type="transmembrane region" description="Helical" evidence="1">
    <location>
        <begin position="140"/>
        <end position="160"/>
    </location>
</feature>
<feature type="transmembrane region" description="Helical" evidence="1">
    <location>
        <begin position="176"/>
        <end position="196"/>
    </location>
</feature>
<name>NQRE_YERE8</name>
<evidence type="ECO:0000255" key="1">
    <source>
        <dbReference type="HAMAP-Rule" id="MF_00429"/>
    </source>
</evidence>
<comment type="function">
    <text evidence="1">NQR complex catalyzes the reduction of ubiquinone-1 to ubiquinol by two successive reactions, coupled with the transport of Na(+) ions from the cytoplasm to the periplasm. NqrA to NqrE are probably involved in the second step, the conversion of ubisemiquinone to ubiquinol.</text>
</comment>
<comment type="catalytic activity">
    <reaction evidence="1">
        <text>a ubiquinone + n Na(+)(in) + NADH + H(+) = a ubiquinol + n Na(+)(out) + NAD(+)</text>
        <dbReference type="Rhea" id="RHEA:47748"/>
        <dbReference type="Rhea" id="RHEA-COMP:9565"/>
        <dbReference type="Rhea" id="RHEA-COMP:9566"/>
        <dbReference type="ChEBI" id="CHEBI:15378"/>
        <dbReference type="ChEBI" id="CHEBI:16389"/>
        <dbReference type="ChEBI" id="CHEBI:17976"/>
        <dbReference type="ChEBI" id="CHEBI:29101"/>
        <dbReference type="ChEBI" id="CHEBI:57540"/>
        <dbReference type="ChEBI" id="CHEBI:57945"/>
        <dbReference type="EC" id="7.2.1.1"/>
    </reaction>
</comment>
<comment type="subunit">
    <text evidence="1">Composed of six subunits; NqrA, NqrB, NqrC, NqrD, NqrE and NqrF.</text>
</comment>
<comment type="subcellular location">
    <subcellularLocation>
        <location evidence="1">Cell inner membrane</location>
        <topology evidence="1">Multi-pass membrane protein</topology>
    </subcellularLocation>
</comment>
<comment type="similarity">
    <text evidence="1">Belongs to the NqrDE/RnfAE family.</text>
</comment>